<protein>
    <recommendedName>
        <fullName evidence="1">NADH-quinone oxidoreductase subunit B</fullName>
        <ecNumber evidence="1">7.1.1.-</ecNumber>
    </recommendedName>
    <alternativeName>
        <fullName evidence="1">NADH dehydrogenase I subunit B</fullName>
    </alternativeName>
    <alternativeName>
        <fullName evidence="1">NDH-1 subunit B</fullName>
    </alternativeName>
</protein>
<organism>
    <name type="scientific">Rhodococcus erythropolis (strain PR4 / NBRC 100887)</name>
    <dbReference type="NCBI Taxonomy" id="234621"/>
    <lineage>
        <taxon>Bacteria</taxon>
        <taxon>Bacillati</taxon>
        <taxon>Actinomycetota</taxon>
        <taxon>Actinomycetes</taxon>
        <taxon>Mycobacteriales</taxon>
        <taxon>Nocardiaceae</taxon>
        <taxon>Rhodococcus</taxon>
        <taxon>Rhodococcus erythropolis group</taxon>
    </lineage>
</organism>
<dbReference type="EC" id="7.1.1.-" evidence="1"/>
<dbReference type="EMBL" id="AP008957">
    <property type="protein sequence ID" value="BAH33434.1"/>
    <property type="molecule type" value="Genomic_DNA"/>
</dbReference>
<dbReference type="RefSeq" id="WP_003942234.1">
    <property type="nucleotide sequence ID" value="NC_012490.1"/>
</dbReference>
<dbReference type="SMR" id="C0ZYJ9"/>
<dbReference type="KEGG" id="rer:RER_27260"/>
<dbReference type="eggNOG" id="COG0377">
    <property type="taxonomic scope" value="Bacteria"/>
</dbReference>
<dbReference type="HOGENOM" id="CLU_055737_7_3_11"/>
<dbReference type="Proteomes" id="UP000002204">
    <property type="component" value="Chromosome"/>
</dbReference>
<dbReference type="GO" id="GO:0005886">
    <property type="term" value="C:plasma membrane"/>
    <property type="evidence" value="ECO:0007669"/>
    <property type="project" value="UniProtKB-SubCell"/>
</dbReference>
<dbReference type="GO" id="GO:0045271">
    <property type="term" value="C:respiratory chain complex I"/>
    <property type="evidence" value="ECO:0007669"/>
    <property type="project" value="TreeGrafter"/>
</dbReference>
<dbReference type="GO" id="GO:0051539">
    <property type="term" value="F:4 iron, 4 sulfur cluster binding"/>
    <property type="evidence" value="ECO:0007669"/>
    <property type="project" value="UniProtKB-KW"/>
</dbReference>
<dbReference type="GO" id="GO:0005506">
    <property type="term" value="F:iron ion binding"/>
    <property type="evidence" value="ECO:0007669"/>
    <property type="project" value="UniProtKB-UniRule"/>
</dbReference>
<dbReference type="GO" id="GO:0008137">
    <property type="term" value="F:NADH dehydrogenase (ubiquinone) activity"/>
    <property type="evidence" value="ECO:0007669"/>
    <property type="project" value="InterPro"/>
</dbReference>
<dbReference type="GO" id="GO:0050136">
    <property type="term" value="F:NADH:ubiquinone reductase (non-electrogenic) activity"/>
    <property type="evidence" value="ECO:0007669"/>
    <property type="project" value="UniProtKB-UniRule"/>
</dbReference>
<dbReference type="GO" id="GO:0048038">
    <property type="term" value="F:quinone binding"/>
    <property type="evidence" value="ECO:0007669"/>
    <property type="project" value="UniProtKB-KW"/>
</dbReference>
<dbReference type="GO" id="GO:0009060">
    <property type="term" value="P:aerobic respiration"/>
    <property type="evidence" value="ECO:0007669"/>
    <property type="project" value="TreeGrafter"/>
</dbReference>
<dbReference type="GO" id="GO:0015990">
    <property type="term" value="P:electron transport coupled proton transport"/>
    <property type="evidence" value="ECO:0007669"/>
    <property type="project" value="TreeGrafter"/>
</dbReference>
<dbReference type="FunFam" id="3.40.50.12280:FF:000004">
    <property type="entry name" value="NADH-quinone oxidoreductase subunit B"/>
    <property type="match status" value="1"/>
</dbReference>
<dbReference type="Gene3D" id="3.40.50.12280">
    <property type="match status" value="1"/>
</dbReference>
<dbReference type="HAMAP" id="MF_01356">
    <property type="entry name" value="NDH1_NuoB"/>
    <property type="match status" value="1"/>
</dbReference>
<dbReference type="InterPro" id="IPR006137">
    <property type="entry name" value="NADH_UbQ_OxRdtase-like_20kDa"/>
</dbReference>
<dbReference type="InterPro" id="IPR006138">
    <property type="entry name" value="NADH_UQ_OxRdtase_20Kd_su"/>
</dbReference>
<dbReference type="NCBIfam" id="TIGR01957">
    <property type="entry name" value="nuoB_fam"/>
    <property type="match status" value="1"/>
</dbReference>
<dbReference type="NCBIfam" id="NF005012">
    <property type="entry name" value="PRK06411.1"/>
    <property type="match status" value="1"/>
</dbReference>
<dbReference type="PANTHER" id="PTHR11995">
    <property type="entry name" value="NADH DEHYDROGENASE"/>
    <property type="match status" value="1"/>
</dbReference>
<dbReference type="PANTHER" id="PTHR11995:SF14">
    <property type="entry name" value="NADH DEHYDROGENASE [UBIQUINONE] IRON-SULFUR PROTEIN 7, MITOCHONDRIAL"/>
    <property type="match status" value="1"/>
</dbReference>
<dbReference type="Pfam" id="PF01058">
    <property type="entry name" value="Oxidored_q6"/>
    <property type="match status" value="1"/>
</dbReference>
<dbReference type="SUPFAM" id="SSF56770">
    <property type="entry name" value="HydA/Nqo6-like"/>
    <property type="match status" value="1"/>
</dbReference>
<dbReference type="PROSITE" id="PS01150">
    <property type="entry name" value="COMPLEX1_20K"/>
    <property type="match status" value="1"/>
</dbReference>
<sequence length="184" mass="19952">MGLEEKLPSGFLLTTVEGLAGYARKGSLWPATFGLACCAIEMMATTSGRFDLARFGMEAFRASPRQADLLIVAGRVSQKMGPVLRQVYDQMAEPKWVLAMGVCASSGGMFNNYAVVQGVDHIVPVDIYLPGCPPRPEMLLNAIIELHRKIQEMPLGVNREEARAAAERAALASTPTIDMKGLLR</sequence>
<reference key="1">
    <citation type="submission" date="2005-03" db="EMBL/GenBank/DDBJ databases">
        <title>Comparison of the complete genome sequences of Rhodococcus erythropolis PR4 and Rhodococcus opacus B4.</title>
        <authorList>
            <person name="Takarada H."/>
            <person name="Sekine M."/>
            <person name="Hosoyama A."/>
            <person name="Yamada R."/>
            <person name="Fujisawa T."/>
            <person name="Omata S."/>
            <person name="Shimizu A."/>
            <person name="Tsukatani N."/>
            <person name="Tanikawa S."/>
            <person name="Fujita N."/>
            <person name="Harayama S."/>
        </authorList>
    </citation>
    <scope>NUCLEOTIDE SEQUENCE [LARGE SCALE GENOMIC DNA]</scope>
    <source>
        <strain>PR4 / NBRC 100887</strain>
    </source>
</reference>
<accession>C0ZYJ9</accession>
<evidence type="ECO:0000255" key="1">
    <source>
        <dbReference type="HAMAP-Rule" id="MF_01356"/>
    </source>
</evidence>
<comment type="function">
    <text evidence="1">NDH-1 shuttles electrons from NADH, via FMN and iron-sulfur (Fe-S) centers, to quinones in the respiratory chain. The immediate electron acceptor for the enzyme in this species is believed to be a menaquinone. Couples the redox reaction to proton translocation (for every two electrons transferred, four hydrogen ions are translocated across the cytoplasmic membrane), and thus conserves the redox energy in a proton gradient.</text>
</comment>
<comment type="catalytic activity">
    <reaction evidence="1">
        <text>a quinone + NADH + 5 H(+)(in) = a quinol + NAD(+) + 4 H(+)(out)</text>
        <dbReference type="Rhea" id="RHEA:57888"/>
        <dbReference type="ChEBI" id="CHEBI:15378"/>
        <dbReference type="ChEBI" id="CHEBI:24646"/>
        <dbReference type="ChEBI" id="CHEBI:57540"/>
        <dbReference type="ChEBI" id="CHEBI:57945"/>
        <dbReference type="ChEBI" id="CHEBI:132124"/>
    </reaction>
</comment>
<comment type="cofactor">
    <cofactor evidence="1">
        <name>[4Fe-4S] cluster</name>
        <dbReference type="ChEBI" id="CHEBI:49883"/>
    </cofactor>
    <text evidence="1">Binds 1 [4Fe-4S] cluster.</text>
</comment>
<comment type="subunit">
    <text evidence="1">NDH-1 is composed of 14 different subunits. Subunits NuoB, C, D, E, F, and G constitute the peripheral sector of the complex.</text>
</comment>
<comment type="subcellular location">
    <subcellularLocation>
        <location evidence="1">Cell membrane</location>
        <topology evidence="1">Peripheral membrane protein</topology>
        <orientation evidence="1">Cytoplasmic side</orientation>
    </subcellularLocation>
</comment>
<comment type="similarity">
    <text evidence="1">Belongs to the complex I 20 kDa subunit family.</text>
</comment>
<proteinExistence type="inferred from homology"/>
<keyword id="KW-0004">4Fe-4S</keyword>
<keyword id="KW-1003">Cell membrane</keyword>
<keyword id="KW-0408">Iron</keyword>
<keyword id="KW-0411">Iron-sulfur</keyword>
<keyword id="KW-0472">Membrane</keyword>
<keyword id="KW-0479">Metal-binding</keyword>
<keyword id="KW-0520">NAD</keyword>
<keyword id="KW-0874">Quinone</keyword>
<keyword id="KW-1278">Translocase</keyword>
<keyword id="KW-0813">Transport</keyword>
<gene>
    <name evidence="1" type="primary">nuoB</name>
    <name type="ordered locus">RER_27260</name>
</gene>
<name>NUOB_RHOE4</name>
<feature type="chain" id="PRO_1000214864" description="NADH-quinone oxidoreductase subunit B">
    <location>
        <begin position="1"/>
        <end position="184"/>
    </location>
</feature>
<feature type="binding site" evidence="1">
    <location>
        <position position="37"/>
    </location>
    <ligand>
        <name>[4Fe-4S] cluster</name>
        <dbReference type="ChEBI" id="CHEBI:49883"/>
    </ligand>
</feature>
<feature type="binding site" evidence="1">
    <location>
        <position position="38"/>
    </location>
    <ligand>
        <name>[4Fe-4S] cluster</name>
        <dbReference type="ChEBI" id="CHEBI:49883"/>
    </ligand>
</feature>
<feature type="binding site" evidence="1">
    <location>
        <position position="103"/>
    </location>
    <ligand>
        <name>[4Fe-4S] cluster</name>
        <dbReference type="ChEBI" id="CHEBI:49883"/>
    </ligand>
</feature>
<feature type="binding site" evidence="1">
    <location>
        <position position="132"/>
    </location>
    <ligand>
        <name>[4Fe-4S] cluster</name>
        <dbReference type="ChEBI" id="CHEBI:49883"/>
    </ligand>
</feature>